<accession>O42852</accession>
<reference key="1">
    <citation type="journal article" date="2002" name="Nature">
        <title>The genome sequence of Schizosaccharomyces pombe.</title>
        <authorList>
            <person name="Wood V."/>
            <person name="Gwilliam R."/>
            <person name="Rajandream M.A."/>
            <person name="Lyne M.H."/>
            <person name="Lyne R."/>
            <person name="Stewart A."/>
            <person name="Sgouros J.G."/>
            <person name="Peat N."/>
            <person name="Hayles J."/>
            <person name="Baker S.G."/>
            <person name="Basham D."/>
            <person name="Bowman S."/>
            <person name="Brooks K."/>
            <person name="Brown D."/>
            <person name="Brown S."/>
            <person name="Chillingworth T."/>
            <person name="Churcher C.M."/>
            <person name="Collins M."/>
            <person name="Connor R."/>
            <person name="Cronin A."/>
            <person name="Davis P."/>
            <person name="Feltwell T."/>
            <person name="Fraser A."/>
            <person name="Gentles S."/>
            <person name="Goble A."/>
            <person name="Hamlin N."/>
            <person name="Harris D.E."/>
            <person name="Hidalgo J."/>
            <person name="Hodgson G."/>
            <person name="Holroyd S."/>
            <person name="Hornsby T."/>
            <person name="Howarth S."/>
            <person name="Huckle E.J."/>
            <person name="Hunt S."/>
            <person name="Jagels K."/>
            <person name="James K.D."/>
            <person name="Jones L."/>
            <person name="Jones M."/>
            <person name="Leather S."/>
            <person name="McDonald S."/>
            <person name="McLean J."/>
            <person name="Mooney P."/>
            <person name="Moule S."/>
            <person name="Mungall K.L."/>
            <person name="Murphy L.D."/>
            <person name="Niblett D."/>
            <person name="Odell C."/>
            <person name="Oliver K."/>
            <person name="O'Neil S."/>
            <person name="Pearson D."/>
            <person name="Quail M.A."/>
            <person name="Rabbinowitsch E."/>
            <person name="Rutherford K.M."/>
            <person name="Rutter S."/>
            <person name="Saunders D."/>
            <person name="Seeger K."/>
            <person name="Sharp S."/>
            <person name="Skelton J."/>
            <person name="Simmonds M.N."/>
            <person name="Squares R."/>
            <person name="Squares S."/>
            <person name="Stevens K."/>
            <person name="Taylor K."/>
            <person name="Taylor R.G."/>
            <person name="Tivey A."/>
            <person name="Walsh S.V."/>
            <person name="Warren T."/>
            <person name="Whitehead S."/>
            <person name="Woodward J.R."/>
            <person name="Volckaert G."/>
            <person name="Aert R."/>
            <person name="Robben J."/>
            <person name="Grymonprez B."/>
            <person name="Weltjens I."/>
            <person name="Vanstreels E."/>
            <person name="Rieger M."/>
            <person name="Schaefer M."/>
            <person name="Mueller-Auer S."/>
            <person name="Gabel C."/>
            <person name="Fuchs M."/>
            <person name="Duesterhoeft A."/>
            <person name="Fritzc C."/>
            <person name="Holzer E."/>
            <person name="Moestl D."/>
            <person name="Hilbert H."/>
            <person name="Borzym K."/>
            <person name="Langer I."/>
            <person name="Beck A."/>
            <person name="Lehrach H."/>
            <person name="Reinhardt R."/>
            <person name="Pohl T.M."/>
            <person name="Eger P."/>
            <person name="Zimmermann W."/>
            <person name="Wedler H."/>
            <person name="Wambutt R."/>
            <person name="Purnelle B."/>
            <person name="Goffeau A."/>
            <person name="Cadieu E."/>
            <person name="Dreano S."/>
            <person name="Gloux S."/>
            <person name="Lelaure V."/>
            <person name="Mottier S."/>
            <person name="Galibert F."/>
            <person name="Aves S.J."/>
            <person name="Xiang Z."/>
            <person name="Hunt C."/>
            <person name="Moore K."/>
            <person name="Hurst S.M."/>
            <person name="Lucas M."/>
            <person name="Rochet M."/>
            <person name="Gaillardin C."/>
            <person name="Tallada V.A."/>
            <person name="Garzon A."/>
            <person name="Thode G."/>
            <person name="Daga R.R."/>
            <person name="Cruzado L."/>
            <person name="Jimenez J."/>
            <person name="Sanchez M."/>
            <person name="del Rey F."/>
            <person name="Benito J."/>
            <person name="Dominguez A."/>
            <person name="Revuelta J.L."/>
            <person name="Moreno S."/>
            <person name="Armstrong J."/>
            <person name="Forsburg S.L."/>
            <person name="Cerutti L."/>
            <person name="Lowe T."/>
            <person name="McCombie W.R."/>
            <person name="Paulsen I."/>
            <person name="Potashkin J."/>
            <person name="Shpakovski G.V."/>
            <person name="Ussery D."/>
            <person name="Barrell B.G."/>
            <person name="Nurse P."/>
        </authorList>
    </citation>
    <scope>NUCLEOTIDE SEQUENCE [LARGE SCALE GENOMIC DNA]</scope>
    <source>
        <strain>972 / ATCC 24843</strain>
    </source>
</reference>
<reference key="2">
    <citation type="journal article" date="2008" name="J. Proteome Res.">
        <title>Phosphoproteome analysis of fission yeast.</title>
        <authorList>
            <person name="Wilson-Grady J.T."/>
            <person name="Villen J."/>
            <person name="Gygi S.P."/>
        </authorList>
    </citation>
    <scope>PHOSPHORYLATION [LARGE SCALE ANALYSIS] AT SER-97</scope>
    <scope>IDENTIFICATION BY MASS SPECTROMETRY</scope>
</reference>
<feature type="chain" id="PRO_0000232410" description="Protein transport protein sec20">
    <location>
        <begin position="1"/>
        <end position="226"/>
    </location>
</feature>
<feature type="topological domain" description="Cytoplasmic" evidence="3">
    <location>
        <begin position="1"/>
        <end position="189"/>
    </location>
</feature>
<feature type="transmembrane region" description="Helical; Anchor for type IV membrane protein" evidence="3">
    <location>
        <begin position="190"/>
        <end position="210"/>
    </location>
</feature>
<feature type="topological domain" description="Lumenal" evidence="3">
    <location>
        <begin position="211"/>
        <end position="226"/>
    </location>
</feature>
<feature type="coiled-coil region" evidence="3">
    <location>
        <begin position="53"/>
        <end position="75"/>
    </location>
</feature>
<feature type="modified residue" description="Phosphoserine" evidence="4">
    <location>
        <position position="97"/>
    </location>
</feature>
<protein>
    <recommendedName>
        <fullName>Protein transport protein sec20</fullName>
    </recommendedName>
</protein>
<proteinExistence type="evidence at protein level"/>
<keyword id="KW-0175">Coiled coil</keyword>
<keyword id="KW-0256">Endoplasmic reticulum</keyword>
<keyword id="KW-0931">ER-Golgi transport</keyword>
<keyword id="KW-0472">Membrane</keyword>
<keyword id="KW-0597">Phosphoprotein</keyword>
<keyword id="KW-0653">Protein transport</keyword>
<keyword id="KW-1185">Reference proteome</keyword>
<keyword id="KW-0812">Transmembrane</keyword>
<keyword id="KW-1133">Transmembrane helix</keyword>
<keyword id="KW-0813">Transport</keyword>
<gene>
    <name evidence="2" type="primary">sec20</name>
    <name type="ORF">SPAC23A1.15c</name>
</gene>
<evidence type="ECO:0000250" key="1"/>
<evidence type="ECO:0000250" key="2">
    <source>
        <dbReference type="UniProtKB" id="P28791"/>
    </source>
</evidence>
<evidence type="ECO:0000255" key="3"/>
<evidence type="ECO:0000269" key="4">
    <source>
    </source>
</evidence>
<evidence type="ECO:0000305" key="5"/>
<comment type="function">
    <text evidence="2">SNARE required for targeting and fusion of Golgi-derived retrograde transport vesicles with the ER.</text>
</comment>
<comment type="subunit">
    <text evidence="2">Component of a SNARE complex consisting of ufe1, sec20, sec22 and use1. Interacts with tip20 through its cytoplasmic domain (By similarity).</text>
</comment>
<comment type="subcellular location">
    <subcellularLocation>
        <location evidence="1">Endoplasmic reticulum membrane</location>
        <topology evidence="1">Single-pass type IV membrane protein</topology>
    </subcellularLocation>
</comment>
<comment type="similarity">
    <text evidence="5">Belongs to the SEC20 family.</text>
</comment>
<organism>
    <name type="scientific">Schizosaccharomyces pombe (strain 972 / ATCC 24843)</name>
    <name type="common">Fission yeast</name>
    <dbReference type="NCBI Taxonomy" id="284812"/>
    <lineage>
        <taxon>Eukaryota</taxon>
        <taxon>Fungi</taxon>
        <taxon>Dikarya</taxon>
        <taxon>Ascomycota</taxon>
        <taxon>Taphrinomycotina</taxon>
        <taxon>Schizosaccharomycetes</taxon>
        <taxon>Schizosaccharomycetales</taxon>
        <taxon>Schizosaccharomycetaceae</taxon>
        <taxon>Schizosaccharomyces</taxon>
    </lineage>
</organism>
<name>SEC20_SCHPO</name>
<dbReference type="EMBL" id="CU329670">
    <property type="protein sequence ID" value="CAA16989.1"/>
    <property type="molecule type" value="Genomic_DNA"/>
</dbReference>
<dbReference type="PIR" id="T38234">
    <property type="entry name" value="T38234"/>
</dbReference>
<dbReference type="RefSeq" id="NP_594444.1">
    <property type="nucleotide sequence ID" value="NM_001019873.2"/>
</dbReference>
<dbReference type="SMR" id="O42852"/>
<dbReference type="BioGRID" id="278480">
    <property type="interactions" value="2"/>
</dbReference>
<dbReference type="FunCoup" id="O42852">
    <property type="interactions" value="68"/>
</dbReference>
<dbReference type="IntAct" id="O42852">
    <property type="interactions" value="1"/>
</dbReference>
<dbReference type="STRING" id="284812.O42852"/>
<dbReference type="iPTMnet" id="O42852"/>
<dbReference type="PaxDb" id="4896-SPAC23A1.15c.1"/>
<dbReference type="EnsemblFungi" id="SPAC23A1.15c.1">
    <property type="protein sequence ID" value="SPAC23A1.15c.1:pep"/>
    <property type="gene ID" value="SPAC23A1.15c"/>
</dbReference>
<dbReference type="GeneID" id="2541996"/>
<dbReference type="KEGG" id="spo:2541996"/>
<dbReference type="PomBase" id="SPAC23A1.15c">
    <property type="gene designation" value="sec20"/>
</dbReference>
<dbReference type="VEuPathDB" id="FungiDB:SPAC23A1.15c"/>
<dbReference type="eggNOG" id="ENOG502S7WD">
    <property type="taxonomic scope" value="Eukaryota"/>
</dbReference>
<dbReference type="HOGENOM" id="CLU_1220305_0_0_1"/>
<dbReference type="InParanoid" id="O42852"/>
<dbReference type="OMA" id="WPILSMF"/>
<dbReference type="Reactome" id="R-SPO-6811434">
    <property type="pathway name" value="COPI-dependent Golgi-to-ER retrograde traffic"/>
</dbReference>
<dbReference type="PRO" id="PR:O42852"/>
<dbReference type="Proteomes" id="UP000002485">
    <property type="component" value="Chromosome I"/>
</dbReference>
<dbReference type="GO" id="GO:0005737">
    <property type="term" value="C:cytoplasm"/>
    <property type="evidence" value="ECO:0007005"/>
    <property type="project" value="PomBase"/>
</dbReference>
<dbReference type="GO" id="GO:0005783">
    <property type="term" value="C:endoplasmic reticulum"/>
    <property type="evidence" value="ECO:0000318"/>
    <property type="project" value="GO_Central"/>
</dbReference>
<dbReference type="GO" id="GO:0005789">
    <property type="term" value="C:endoplasmic reticulum membrane"/>
    <property type="evidence" value="ECO:0000250"/>
    <property type="project" value="PomBase"/>
</dbReference>
<dbReference type="GO" id="GO:0005794">
    <property type="term" value="C:Golgi apparatus"/>
    <property type="evidence" value="ECO:0007005"/>
    <property type="project" value="PomBase"/>
</dbReference>
<dbReference type="GO" id="GO:0031201">
    <property type="term" value="C:SNARE complex"/>
    <property type="evidence" value="ECO:0000318"/>
    <property type="project" value="GO_Central"/>
</dbReference>
<dbReference type="GO" id="GO:0005484">
    <property type="term" value="F:SNAP receptor activity"/>
    <property type="evidence" value="ECO:0000250"/>
    <property type="project" value="PomBase"/>
</dbReference>
<dbReference type="GO" id="GO:0006886">
    <property type="term" value="P:intracellular protein transport"/>
    <property type="evidence" value="ECO:0000303"/>
    <property type="project" value="PomBase"/>
</dbReference>
<dbReference type="GO" id="GO:0006890">
    <property type="term" value="P:retrograde vesicle-mediated transport, Golgi to endoplasmic reticulum"/>
    <property type="evidence" value="ECO:0000318"/>
    <property type="project" value="GO_Central"/>
</dbReference>
<dbReference type="InterPro" id="IPR005606">
    <property type="entry name" value="Sec20"/>
</dbReference>
<dbReference type="InterPro" id="IPR056173">
    <property type="entry name" value="Sec20_C"/>
</dbReference>
<dbReference type="PANTHER" id="PTHR12825">
    <property type="entry name" value="BNIP1-RELATED"/>
    <property type="match status" value="1"/>
</dbReference>
<dbReference type="PANTHER" id="PTHR12825:SF0">
    <property type="entry name" value="VESICLE TRANSPORT PROTEIN SEC20"/>
    <property type="match status" value="1"/>
</dbReference>
<dbReference type="Pfam" id="PF03908">
    <property type="entry name" value="Sec20"/>
    <property type="match status" value="1"/>
</dbReference>
<sequence>MADVLNALEEKVVELQQSESVEVIKRHFREFRKIWETARVELEYSSIQLDSVLRYEKAVQEYIRLNRRYRNKIASGEPWLPIAQEIGKIVDEEEITSPSDGSLQKRSMDNSGSWQSDDIYLTSASQVTAAMRDIHAQMVQAVDMSAENAMELSSSTNLLETLQEKYFGVEDVLYTSKRIIKSLKLSDRSDYFLVVSGFGFFIFVVVYLLFKRIVWPILSMFLWFLR</sequence>